<dbReference type="EC" id="2.7.8.7" evidence="1"/>
<dbReference type="EMBL" id="CP000542">
    <property type="protein sequence ID" value="ABM58293.1"/>
    <property type="molecule type" value="Genomic_DNA"/>
</dbReference>
<dbReference type="RefSeq" id="WP_011810294.1">
    <property type="nucleotide sequence ID" value="NC_008786.1"/>
</dbReference>
<dbReference type="SMR" id="A1WKY6"/>
<dbReference type="STRING" id="391735.Veis_2548"/>
<dbReference type="GeneID" id="76461078"/>
<dbReference type="KEGG" id="vei:Veis_2548"/>
<dbReference type="eggNOG" id="COG0736">
    <property type="taxonomic scope" value="Bacteria"/>
</dbReference>
<dbReference type="HOGENOM" id="CLU_089696_2_1_4"/>
<dbReference type="OrthoDB" id="517356at2"/>
<dbReference type="Proteomes" id="UP000000374">
    <property type="component" value="Chromosome"/>
</dbReference>
<dbReference type="GO" id="GO:0005737">
    <property type="term" value="C:cytoplasm"/>
    <property type="evidence" value="ECO:0007669"/>
    <property type="project" value="UniProtKB-SubCell"/>
</dbReference>
<dbReference type="GO" id="GO:0008897">
    <property type="term" value="F:holo-[acyl-carrier-protein] synthase activity"/>
    <property type="evidence" value="ECO:0007669"/>
    <property type="project" value="UniProtKB-UniRule"/>
</dbReference>
<dbReference type="GO" id="GO:0000287">
    <property type="term" value="F:magnesium ion binding"/>
    <property type="evidence" value="ECO:0007669"/>
    <property type="project" value="UniProtKB-UniRule"/>
</dbReference>
<dbReference type="GO" id="GO:0006633">
    <property type="term" value="P:fatty acid biosynthetic process"/>
    <property type="evidence" value="ECO:0007669"/>
    <property type="project" value="UniProtKB-UniRule"/>
</dbReference>
<dbReference type="Gene3D" id="3.90.470.20">
    <property type="entry name" value="4'-phosphopantetheinyl transferase domain"/>
    <property type="match status" value="1"/>
</dbReference>
<dbReference type="HAMAP" id="MF_00101">
    <property type="entry name" value="AcpS"/>
    <property type="match status" value="1"/>
</dbReference>
<dbReference type="InterPro" id="IPR008278">
    <property type="entry name" value="4-PPantetheinyl_Trfase_dom"/>
</dbReference>
<dbReference type="InterPro" id="IPR037143">
    <property type="entry name" value="4-PPantetheinyl_Trfase_dom_sf"/>
</dbReference>
<dbReference type="InterPro" id="IPR002582">
    <property type="entry name" value="ACPS"/>
</dbReference>
<dbReference type="InterPro" id="IPR004568">
    <property type="entry name" value="Ppantetheine-prot_Trfase_dom"/>
</dbReference>
<dbReference type="NCBIfam" id="TIGR00516">
    <property type="entry name" value="acpS"/>
    <property type="match status" value="1"/>
</dbReference>
<dbReference type="NCBIfam" id="TIGR00556">
    <property type="entry name" value="pantethn_trn"/>
    <property type="match status" value="1"/>
</dbReference>
<dbReference type="Pfam" id="PF01648">
    <property type="entry name" value="ACPS"/>
    <property type="match status" value="1"/>
</dbReference>
<dbReference type="SUPFAM" id="SSF56214">
    <property type="entry name" value="4'-phosphopantetheinyl transferase"/>
    <property type="match status" value="1"/>
</dbReference>
<keyword id="KW-0963">Cytoplasm</keyword>
<keyword id="KW-0275">Fatty acid biosynthesis</keyword>
<keyword id="KW-0276">Fatty acid metabolism</keyword>
<keyword id="KW-0444">Lipid biosynthesis</keyword>
<keyword id="KW-0443">Lipid metabolism</keyword>
<keyword id="KW-0460">Magnesium</keyword>
<keyword id="KW-0479">Metal-binding</keyword>
<keyword id="KW-1185">Reference proteome</keyword>
<keyword id="KW-0808">Transferase</keyword>
<sequence>MHIGIDIVEVPRIAKALNRGDKGFLNAVYTAGEAAHIEQAHAGDVRAAGIWAAKEAVVKAFGVGFSEGVTFRDVEVRYTATGQPQAVLSGKLASLAVDRSLQVLSISISHTENYAAATALVGPVSAEVRPV</sequence>
<protein>
    <recommendedName>
        <fullName evidence="1">Holo-[acyl-carrier-protein] synthase</fullName>
        <shortName evidence="1">Holo-ACP synthase</shortName>
        <ecNumber evidence="1">2.7.8.7</ecNumber>
    </recommendedName>
    <alternativeName>
        <fullName evidence="1">4'-phosphopantetheinyl transferase AcpS</fullName>
    </alternativeName>
</protein>
<proteinExistence type="inferred from homology"/>
<reference key="1">
    <citation type="submission" date="2006-12" db="EMBL/GenBank/DDBJ databases">
        <title>Complete sequence of chromosome 1 of Verminephrobacter eiseniae EF01-2.</title>
        <authorList>
            <person name="Copeland A."/>
            <person name="Lucas S."/>
            <person name="Lapidus A."/>
            <person name="Barry K."/>
            <person name="Detter J.C."/>
            <person name="Glavina del Rio T."/>
            <person name="Dalin E."/>
            <person name="Tice H."/>
            <person name="Pitluck S."/>
            <person name="Chertkov O."/>
            <person name="Brettin T."/>
            <person name="Bruce D."/>
            <person name="Han C."/>
            <person name="Tapia R."/>
            <person name="Gilna P."/>
            <person name="Schmutz J."/>
            <person name="Larimer F."/>
            <person name="Land M."/>
            <person name="Hauser L."/>
            <person name="Kyrpides N."/>
            <person name="Kim E."/>
            <person name="Stahl D."/>
            <person name="Richardson P."/>
        </authorList>
    </citation>
    <scope>NUCLEOTIDE SEQUENCE [LARGE SCALE GENOMIC DNA]</scope>
    <source>
        <strain>EF01-2</strain>
    </source>
</reference>
<comment type="function">
    <text evidence="1">Transfers the 4'-phosphopantetheine moiety from coenzyme A to a Ser of acyl-carrier-protein.</text>
</comment>
<comment type="catalytic activity">
    <reaction evidence="1">
        <text>apo-[ACP] + CoA = holo-[ACP] + adenosine 3',5'-bisphosphate + H(+)</text>
        <dbReference type="Rhea" id="RHEA:12068"/>
        <dbReference type="Rhea" id="RHEA-COMP:9685"/>
        <dbReference type="Rhea" id="RHEA-COMP:9690"/>
        <dbReference type="ChEBI" id="CHEBI:15378"/>
        <dbReference type="ChEBI" id="CHEBI:29999"/>
        <dbReference type="ChEBI" id="CHEBI:57287"/>
        <dbReference type="ChEBI" id="CHEBI:58343"/>
        <dbReference type="ChEBI" id="CHEBI:64479"/>
        <dbReference type="EC" id="2.7.8.7"/>
    </reaction>
</comment>
<comment type="cofactor">
    <cofactor evidence="1">
        <name>Mg(2+)</name>
        <dbReference type="ChEBI" id="CHEBI:18420"/>
    </cofactor>
</comment>
<comment type="subcellular location">
    <subcellularLocation>
        <location evidence="1">Cytoplasm</location>
    </subcellularLocation>
</comment>
<comment type="similarity">
    <text evidence="1">Belongs to the P-Pant transferase superfamily. AcpS family.</text>
</comment>
<accession>A1WKY6</accession>
<feature type="chain" id="PRO_1000008523" description="Holo-[acyl-carrier-protein] synthase">
    <location>
        <begin position="1"/>
        <end position="131"/>
    </location>
</feature>
<feature type="binding site" evidence="1">
    <location>
        <position position="6"/>
    </location>
    <ligand>
        <name>Mg(2+)</name>
        <dbReference type="ChEBI" id="CHEBI:18420"/>
    </ligand>
</feature>
<feature type="binding site" evidence="1">
    <location>
        <position position="55"/>
    </location>
    <ligand>
        <name>Mg(2+)</name>
        <dbReference type="ChEBI" id="CHEBI:18420"/>
    </ligand>
</feature>
<evidence type="ECO:0000255" key="1">
    <source>
        <dbReference type="HAMAP-Rule" id="MF_00101"/>
    </source>
</evidence>
<name>ACPS_VEREI</name>
<gene>
    <name evidence="1" type="primary">acpS</name>
    <name type="ordered locus">Veis_2548</name>
</gene>
<organism>
    <name type="scientific">Verminephrobacter eiseniae (strain EF01-2)</name>
    <dbReference type="NCBI Taxonomy" id="391735"/>
    <lineage>
        <taxon>Bacteria</taxon>
        <taxon>Pseudomonadati</taxon>
        <taxon>Pseudomonadota</taxon>
        <taxon>Betaproteobacteria</taxon>
        <taxon>Burkholderiales</taxon>
        <taxon>Comamonadaceae</taxon>
        <taxon>Verminephrobacter</taxon>
    </lineage>
</organism>